<feature type="chain" id="PRO_1000055450" description="Large ribosomal subunit protein uL13">
    <location>
        <begin position="1"/>
        <end position="185"/>
    </location>
</feature>
<dbReference type="EMBL" id="CP000504">
    <property type="protein sequence ID" value="ABL87873.1"/>
    <property type="molecule type" value="Genomic_DNA"/>
</dbReference>
<dbReference type="RefSeq" id="WP_011762449.1">
    <property type="nucleotide sequence ID" value="NC_008701.1"/>
</dbReference>
<dbReference type="SMR" id="A1RSE1"/>
<dbReference type="STRING" id="384616.Pisl_0695"/>
<dbReference type="GeneID" id="4616499"/>
<dbReference type="KEGG" id="pis:Pisl_0695"/>
<dbReference type="eggNOG" id="arCOG04242">
    <property type="taxonomic scope" value="Archaea"/>
</dbReference>
<dbReference type="HOGENOM" id="CLU_076922_1_0_2"/>
<dbReference type="OrthoDB" id="7668at2157"/>
<dbReference type="Proteomes" id="UP000002595">
    <property type="component" value="Chromosome"/>
</dbReference>
<dbReference type="GO" id="GO:0022625">
    <property type="term" value="C:cytosolic large ribosomal subunit"/>
    <property type="evidence" value="ECO:0007669"/>
    <property type="project" value="TreeGrafter"/>
</dbReference>
<dbReference type="GO" id="GO:0003729">
    <property type="term" value="F:mRNA binding"/>
    <property type="evidence" value="ECO:0007669"/>
    <property type="project" value="TreeGrafter"/>
</dbReference>
<dbReference type="GO" id="GO:0003735">
    <property type="term" value="F:structural constituent of ribosome"/>
    <property type="evidence" value="ECO:0007669"/>
    <property type="project" value="InterPro"/>
</dbReference>
<dbReference type="GO" id="GO:0017148">
    <property type="term" value="P:negative regulation of translation"/>
    <property type="evidence" value="ECO:0007669"/>
    <property type="project" value="TreeGrafter"/>
</dbReference>
<dbReference type="GO" id="GO:0006412">
    <property type="term" value="P:translation"/>
    <property type="evidence" value="ECO:0007669"/>
    <property type="project" value="UniProtKB-UniRule"/>
</dbReference>
<dbReference type="CDD" id="cd00392">
    <property type="entry name" value="Ribosomal_L13"/>
    <property type="match status" value="1"/>
</dbReference>
<dbReference type="Gene3D" id="3.90.1180.10">
    <property type="entry name" value="Ribosomal protein L13"/>
    <property type="match status" value="1"/>
</dbReference>
<dbReference type="HAMAP" id="MF_01366">
    <property type="entry name" value="Ribosomal_uL13"/>
    <property type="match status" value="1"/>
</dbReference>
<dbReference type="InterPro" id="IPR005822">
    <property type="entry name" value="Ribosomal_uL13"/>
</dbReference>
<dbReference type="InterPro" id="IPR005823">
    <property type="entry name" value="Ribosomal_uL13_bac-type"/>
</dbReference>
<dbReference type="InterPro" id="IPR023563">
    <property type="entry name" value="Ribosomal_uL13_CS"/>
</dbReference>
<dbReference type="InterPro" id="IPR005755">
    <property type="entry name" value="Ribosomal_uL13_euk/arc"/>
</dbReference>
<dbReference type="InterPro" id="IPR036899">
    <property type="entry name" value="Ribosomal_uL13_sf"/>
</dbReference>
<dbReference type="NCBIfam" id="TIGR01077">
    <property type="entry name" value="L13_A_E"/>
    <property type="match status" value="1"/>
</dbReference>
<dbReference type="NCBIfam" id="NF005004">
    <property type="entry name" value="PRK06394.1"/>
    <property type="match status" value="1"/>
</dbReference>
<dbReference type="PANTHER" id="PTHR11545:SF3">
    <property type="entry name" value="LARGE RIBOSOMAL SUBUNIT PROTEIN UL13"/>
    <property type="match status" value="1"/>
</dbReference>
<dbReference type="PANTHER" id="PTHR11545">
    <property type="entry name" value="RIBOSOMAL PROTEIN L13"/>
    <property type="match status" value="1"/>
</dbReference>
<dbReference type="Pfam" id="PF00572">
    <property type="entry name" value="Ribosomal_L13"/>
    <property type="match status" value="1"/>
</dbReference>
<dbReference type="PIRSF" id="PIRSF002181">
    <property type="entry name" value="Ribosomal_L13"/>
    <property type="match status" value="1"/>
</dbReference>
<dbReference type="SUPFAM" id="SSF52161">
    <property type="entry name" value="Ribosomal protein L13"/>
    <property type="match status" value="1"/>
</dbReference>
<dbReference type="PROSITE" id="PS00783">
    <property type="entry name" value="RIBOSOMAL_L13"/>
    <property type="match status" value="1"/>
</dbReference>
<protein>
    <recommendedName>
        <fullName evidence="1">Large ribosomal subunit protein uL13</fullName>
    </recommendedName>
    <alternativeName>
        <fullName evidence="2">50S ribosomal protein L13</fullName>
    </alternativeName>
</protein>
<evidence type="ECO:0000255" key="1">
    <source>
        <dbReference type="HAMAP-Rule" id="MF_01366"/>
    </source>
</evidence>
<evidence type="ECO:0000305" key="2"/>
<proteinExistence type="inferred from homology"/>
<name>RL13_PYRIL</name>
<reference key="1">
    <citation type="submission" date="2006-12" db="EMBL/GenBank/DDBJ databases">
        <title>Complete sequence of Pyrobaculum islandicum DSM 4184.</title>
        <authorList>
            <person name="Copeland A."/>
            <person name="Lucas S."/>
            <person name="Lapidus A."/>
            <person name="Barry K."/>
            <person name="Detter J.C."/>
            <person name="Glavina del Rio T."/>
            <person name="Dalin E."/>
            <person name="Tice H."/>
            <person name="Pitluck S."/>
            <person name="Meincke L."/>
            <person name="Brettin T."/>
            <person name="Bruce D."/>
            <person name="Han C."/>
            <person name="Tapia R."/>
            <person name="Gilna P."/>
            <person name="Schmutz J."/>
            <person name="Larimer F."/>
            <person name="Land M."/>
            <person name="Hauser L."/>
            <person name="Kyrpides N."/>
            <person name="Mikhailova N."/>
            <person name="Cozen A.E."/>
            <person name="Fitz-Gibbon S.T."/>
            <person name="House C.H."/>
            <person name="Saltikov C."/>
            <person name="Lowe T."/>
            <person name="Richardson P."/>
        </authorList>
    </citation>
    <scope>NUCLEOTIDE SEQUENCE [LARGE SCALE GENOMIC DNA]</scope>
    <source>
        <strain>DSM 4184 / JCM 9189 / GEO3</strain>
    </source>
</reference>
<gene>
    <name evidence="1" type="primary">rpl13</name>
    <name type="ordered locus">Pisl_0695</name>
</gene>
<accession>A1RSE1</accession>
<sequence length="185" mass="21859">MIIEKRELEQLPERGEIIIDADGHIAGRLATYVAKALLERPSLRIVVVNAEKLVITGDRKMVIEWFKRKISEWRTHYNPEKAGPKIPRRPDRVFKRIVRGMLPKKNMRGRSALKRLRVYMSIPLEMLNRKKLVLYEVPLAKLKVKPLAKFVTLEEVWRNIDFAAWEQWKRAQEIWQKRIKQVTGG</sequence>
<organism>
    <name type="scientific">Pyrobaculum islandicum (strain DSM 4184 / JCM 9189 / GEO3)</name>
    <dbReference type="NCBI Taxonomy" id="384616"/>
    <lineage>
        <taxon>Archaea</taxon>
        <taxon>Thermoproteota</taxon>
        <taxon>Thermoprotei</taxon>
        <taxon>Thermoproteales</taxon>
        <taxon>Thermoproteaceae</taxon>
        <taxon>Pyrobaculum</taxon>
    </lineage>
</organism>
<keyword id="KW-0687">Ribonucleoprotein</keyword>
<keyword id="KW-0689">Ribosomal protein</keyword>
<comment type="function">
    <text evidence="1">This protein is one of the early assembly proteins of the 50S ribosomal subunit, although it is not seen to bind rRNA by itself. It is important during the early stages of 50S assembly.</text>
</comment>
<comment type="subunit">
    <text evidence="1">Part of the 50S ribosomal subunit.</text>
</comment>
<comment type="similarity">
    <text evidence="1">Belongs to the universal ribosomal protein uL13 family.</text>
</comment>